<dbReference type="EC" id="1.14.19.17" evidence="2"/>
<dbReference type="EC" id="5.2.1.-" evidence="3"/>
<dbReference type="EMBL" id="AY036902">
    <property type="protein sequence ID" value="AAK64511.1"/>
    <property type="molecule type" value="mRNA"/>
</dbReference>
<dbReference type="EMBL" id="AJ938081">
    <property type="protein sequence ID" value="CAI79416.1"/>
    <property type="molecule type" value="mRNA"/>
</dbReference>
<dbReference type="EMBL" id="BC083727">
    <property type="protein sequence ID" value="AAH83727.1"/>
    <property type="molecule type" value="mRNA"/>
</dbReference>
<dbReference type="RefSeq" id="NP_445775.2">
    <property type="nucleotide sequence ID" value="NM_053323.2"/>
</dbReference>
<dbReference type="ELM" id="Q5XIF5"/>
<dbReference type="FunCoup" id="Q5XIF5">
    <property type="interactions" value="2360"/>
</dbReference>
<dbReference type="STRING" id="10116.ENSRNOP00000004319"/>
<dbReference type="BindingDB" id="Q5XIF5"/>
<dbReference type="ChEMBL" id="CHEMBL5291552"/>
<dbReference type="PhosphoSitePlus" id="Q5XIF5"/>
<dbReference type="PaxDb" id="10116-ENSRNOP00000004319"/>
<dbReference type="Ensembl" id="ENSRNOT00000004319.4">
    <property type="protein sequence ID" value="ENSRNOP00000004319.2"/>
    <property type="gene ID" value="ENSRNOG00000003223.4"/>
</dbReference>
<dbReference type="GeneID" id="58970"/>
<dbReference type="KEGG" id="rno:58970"/>
<dbReference type="UCSC" id="RGD:70917">
    <property type="organism name" value="rat"/>
</dbReference>
<dbReference type="AGR" id="RGD:70917"/>
<dbReference type="CTD" id="8560"/>
<dbReference type="RGD" id="70917">
    <property type="gene designation" value="Degs1"/>
</dbReference>
<dbReference type="eggNOG" id="KOG2987">
    <property type="taxonomic scope" value="Eukaryota"/>
</dbReference>
<dbReference type="GeneTree" id="ENSGT00390000013448"/>
<dbReference type="HOGENOM" id="CLU_032156_0_0_1"/>
<dbReference type="InParanoid" id="Q5XIF5"/>
<dbReference type="OMA" id="GATCNQN"/>
<dbReference type="OrthoDB" id="200948at2759"/>
<dbReference type="PhylomeDB" id="Q5XIF5"/>
<dbReference type="TreeFam" id="TF313582"/>
<dbReference type="BRENDA" id="1.14.19.17">
    <property type="organism ID" value="5301"/>
</dbReference>
<dbReference type="Reactome" id="R-RNO-1660661">
    <property type="pathway name" value="Sphingolipid de novo biosynthesis"/>
</dbReference>
<dbReference type="Reactome" id="R-RNO-6798695">
    <property type="pathway name" value="Neutrophil degranulation"/>
</dbReference>
<dbReference type="PRO" id="PR:Q5XIF5"/>
<dbReference type="Proteomes" id="UP000002494">
    <property type="component" value="Chromosome 13"/>
</dbReference>
<dbReference type="Bgee" id="ENSRNOG00000003223">
    <property type="expression patterns" value="Expressed in esophagus and 20 other cell types or tissues"/>
</dbReference>
<dbReference type="GO" id="GO:0005789">
    <property type="term" value="C:endoplasmic reticulum membrane"/>
    <property type="evidence" value="ECO:0007669"/>
    <property type="project" value="UniProtKB-SubCell"/>
</dbReference>
<dbReference type="GO" id="GO:0031966">
    <property type="term" value="C:mitochondrial membrane"/>
    <property type="evidence" value="ECO:0007669"/>
    <property type="project" value="UniProtKB-SubCell"/>
</dbReference>
<dbReference type="GO" id="GO:0016859">
    <property type="term" value="F:cis-trans isomerase activity"/>
    <property type="evidence" value="ECO:0000250"/>
    <property type="project" value="UniProtKB"/>
</dbReference>
<dbReference type="GO" id="GO:0050251">
    <property type="term" value="F:retinol isomerase activity"/>
    <property type="evidence" value="ECO:0000250"/>
    <property type="project" value="UniProtKB"/>
</dbReference>
<dbReference type="GO" id="GO:0042284">
    <property type="term" value="F:sphingolipid delta-4 desaturase activity"/>
    <property type="evidence" value="ECO:0000266"/>
    <property type="project" value="RGD"/>
</dbReference>
<dbReference type="GO" id="GO:0046513">
    <property type="term" value="P:ceramide biosynthetic process"/>
    <property type="evidence" value="ECO:0000266"/>
    <property type="project" value="RGD"/>
</dbReference>
<dbReference type="GO" id="GO:0006633">
    <property type="term" value="P:fatty acid biosynthetic process"/>
    <property type="evidence" value="ECO:0007669"/>
    <property type="project" value="UniProtKB-KW"/>
</dbReference>
<dbReference type="GO" id="GO:0043217">
    <property type="term" value="P:myelin maintenance"/>
    <property type="evidence" value="ECO:0000250"/>
    <property type="project" value="UniProtKB"/>
</dbReference>
<dbReference type="GO" id="GO:0043065">
    <property type="term" value="P:positive regulation of apoptotic process"/>
    <property type="evidence" value="ECO:0000266"/>
    <property type="project" value="RGD"/>
</dbReference>
<dbReference type="CDD" id="cd03508">
    <property type="entry name" value="Delta4-sphingolipid-FADS-like"/>
    <property type="match status" value="1"/>
</dbReference>
<dbReference type="InterPro" id="IPR011388">
    <property type="entry name" value="DES1/DES2"/>
</dbReference>
<dbReference type="InterPro" id="IPR005804">
    <property type="entry name" value="FA_desaturase_dom"/>
</dbReference>
<dbReference type="InterPro" id="IPR013866">
    <property type="entry name" value="Sphingolipid_d4-desaturase_N"/>
</dbReference>
<dbReference type="PANTHER" id="PTHR12879">
    <property type="entry name" value="SPHINGOLIPID DELTA 4 DESATURASE/C-4 HYDROXYLASE PROTEIN DES2"/>
    <property type="match status" value="1"/>
</dbReference>
<dbReference type="PANTHER" id="PTHR12879:SF2">
    <property type="entry name" value="SPHINGOLIPID DELTA(4)-DESATURASE DES1"/>
    <property type="match status" value="1"/>
</dbReference>
<dbReference type="Pfam" id="PF00487">
    <property type="entry name" value="FA_desaturase"/>
    <property type="match status" value="1"/>
</dbReference>
<dbReference type="Pfam" id="PF08557">
    <property type="entry name" value="Lipid_DES"/>
    <property type="match status" value="1"/>
</dbReference>
<dbReference type="PIRSF" id="PIRSF017228">
    <property type="entry name" value="Sphnglp_dlt4_des"/>
    <property type="match status" value="1"/>
</dbReference>
<dbReference type="SMART" id="SM01269">
    <property type="entry name" value="Lipid_DES"/>
    <property type="match status" value="1"/>
</dbReference>
<keyword id="KW-0256">Endoplasmic reticulum</keyword>
<keyword id="KW-0275">Fatty acid biosynthesis</keyword>
<keyword id="KW-0276">Fatty acid metabolism</keyword>
<keyword id="KW-0413">Isomerase</keyword>
<keyword id="KW-0444">Lipid biosynthesis</keyword>
<keyword id="KW-0443">Lipid metabolism</keyword>
<keyword id="KW-0449">Lipoprotein</keyword>
<keyword id="KW-0472">Membrane</keyword>
<keyword id="KW-0496">Mitochondrion</keyword>
<keyword id="KW-0519">Myristate</keyword>
<keyword id="KW-0560">Oxidoreductase</keyword>
<keyword id="KW-0597">Phosphoprotein</keyword>
<keyword id="KW-1185">Reference proteome</keyword>
<keyword id="KW-0812">Transmembrane</keyword>
<keyword id="KW-1133">Transmembrane helix</keyword>
<comment type="function">
    <text evidence="1 3">Has sphingolipid-delta-4-desaturase activity. Converts D-erythro-sphinganine to D-erythro-sphingosine (E-sphing-4-enine) (By similarity). Catalyzes the equilibrium isomerization of retinols (By similarity).</text>
</comment>
<comment type="catalytic activity">
    <reaction evidence="2">
        <text>an N-acylsphinganine + 2 Fe(II)-[cytochrome b5] + O2 + 2 H(+) = an N-acylsphing-4-enine + 2 Fe(III)-[cytochrome b5] + 2 H2O</text>
        <dbReference type="Rhea" id="RHEA:46544"/>
        <dbReference type="Rhea" id="RHEA-COMP:10438"/>
        <dbReference type="Rhea" id="RHEA-COMP:10439"/>
        <dbReference type="ChEBI" id="CHEBI:15377"/>
        <dbReference type="ChEBI" id="CHEBI:15378"/>
        <dbReference type="ChEBI" id="CHEBI:15379"/>
        <dbReference type="ChEBI" id="CHEBI:29033"/>
        <dbReference type="ChEBI" id="CHEBI:29034"/>
        <dbReference type="ChEBI" id="CHEBI:31488"/>
        <dbReference type="ChEBI" id="CHEBI:52639"/>
        <dbReference type="EC" id="1.14.19.17"/>
    </reaction>
    <physiologicalReaction direction="left-to-right" evidence="2">
        <dbReference type="Rhea" id="RHEA:46545"/>
    </physiologicalReaction>
</comment>
<comment type="catalytic activity">
    <reaction evidence="1">
        <text>all-trans-retinol = 11-cis-retinol</text>
        <dbReference type="Rhea" id="RHEA:19141"/>
        <dbReference type="ChEBI" id="CHEBI:16302"/>
        <dbReference type="ChEBI" id="CHEBI:17336"/>
    </reaction>
    <physiologicalReaction direction="left-to-right" evidence="1">
        <dbReference type="Rhea" id="RHEA:19142"/>
    </physiologicalReaction>
    <physiologicalReaction direction="right-to-left" evidence="1">
        <dbReference type="Rhea" id="RHEA:19143"/>
    </physiologicalReaction>
</comment>
<comment type="catalytic activity">
    <reaction evidence="3">
        <text>all-trans-retinol = 9-cis-retinol</text>
        <dbReference type="Rhea" id="RHEA:55348"/>
        <dbReference type="ChEBI" id="CHEBI:17336"/>
        <dbReference type="ChEBI" id="CHEBI:78272"/>
    </reaction>
    <physiologicalReaction direction="left-to-right" evidence="3">
        <dbReference type="Rhea" id="RHEA:55349"/>
    </physiologicalReaction>
</comment>
<comment type="catalytic activity">
    <reaction evidence="3">
        <text>all-trans-retinol = 13-cis-retinol</text>
        <dbReference type="Rhea" id="RHEA:55352"/>
        <dbReference type="ChEBI" id="CHEBI:17336"/>
        <dbReference type="ChEBI" id="CHEBI:45479"/>
    </reaction>
    <physiologicalReaction direction="left-to-right" evidence="3">
        <dbReference type="Rhea" id="RHEA:55353"/>
    </physiologicalReaction>
</comment>
<comment type="catalytic activity">
    <reaction evidence="3">
        <text>11-cis-retinol = 13-cis-retinol</text>
        <dbReference type="Rhea" id="RHEA:55356"/>
        <dbReference type="ChEBI" id="CHEBI:16302"/>
        <dbReference type="ChEBI" id="CHEBI:45479"/>
    </reaction>
    <physiologicalReaction direction="left-to-right" evidence="3">
        <dbReference type="Rhea" id="RHEA:55357"/>
    </physiologicalReaction>
</comment>
<comment type="catalytic activity">
    <reaction evidence="3">
        <text>11-cis-retinol = 9-cis-retinol</text>
        <dbReference type="Rhea" id="RHEA:55360"/>
        <dbReference type="ChEBI" id="CHEBI:16302"/>
        <dbReference type="ChEBI" id="CHEBI:78272"/>
    </reaction>
    <physiologicalReaction direction="left-to-right" evidence="3">
        <dbReference type="Rhea" id="RHEA:55361"/>
    </physiologicalReaction>
</comment>
<comment type="subunit">
    <text evidence="3">Interacts with RLBP1; the interaction increases synthesis of chromophore-precursors by DEGS1.</text>
</comment>
<comment type="subcellular location">
    <subcellularLocation>
        <location evidence="2">Mitochondrion membrane</location>
    </subcellularLocation>
    <subcellularLocation>
        <location evidence="2">Endoplasmic reticulum membrane</location>
        <topology evidence="2">Multi-pass membrane protein</topology>
    </subcellularLocation>
</comment>
<comment type="PTM">
    <text evidence="2">Myristoylation can target the enzyme to the mitochondria leading to an increase in ceramide levels.</text>
</comment>
<comment type="similarity">
    <text evidence="5">Belongs to the fatty acid desaturase type 1 family. DEGS subfamily.</text>
</comment>
<reference key="1">
    <citation type="submission" date="2001-05" db="EMBL/GenBank/DDBJ databases">
        <title>A rat homolog of DEGS.</title>
        <authorList>
            <person name="Tirado O.M."/>
            <person name="Selva D.M."/>
            <person name="Munell F."/>
            <person name="Reventos J."/>
        </authorList>
    </citation>
    <scope>NUCLEOTIDE SEQUENCE [MRNA]</scope>
    <source>
        <strain>Sprague-Dawley</strain>
        <tissue>Testis</tissue>
    </source>
</reference>
<reference key="2">
    <citation type="submission" date="2005-04" db="EMBL/GenBank/DDBJ databases">
        <title>Cloning and characterization of the rat sphingolipid delta 4 desaturases DES1 and DES2.</title>
        <authorList>
            <person name="Goenaga D."/>
            <person name="Catheline D."/>
            <person name="Legrand P."/>
            <person name="Rioux V."/>
        </authorList>
    </citation>
    <scope>NUCLEOTIDE SEQUENCE [MRNA]</scope>
    <source>
        <strain>Sprague-Dawley</strain>
    </source>
</reference>
<reference key="3">
    <citation type="journal article" date="2004" name="Genome Res.">
        <title>The status, quality, and expansion of the NIH full-length cDNA project: the Mammalian Gene Collection (MGC).</title>
        <authorList>
            <consortium name="The MGC Project Team"/>
        </authorList>
    </citation>
    <scope>NUCLEOTIDE SEQUENCE [LARGE SCALE MRNA]</scope>
    <source>
        <tissue>Heart</tissue>
    </source>
</reference>
<gene>
    <name evidence="6" type="primary">Degs1</name>
    <name type="synonym">Degs</name>
    <name type="synonym">Des1</name>
</gene>
<organism>
    <name type="scientific">Rattus norvegicus</name>
    <name type="common">Rat</name>
    <dbReference type="NCBI Taxonomy" id="10116"/>
    <lineage>
        <taxon>Eukaryota</taxon>
        <taxon>Metazoa</taxon>
        <taxon>Chordata</taxon>
        <taxon>Craniata</taxon>
        <taxon>Vertebrata</taxon>
        <taxon>Euteleostomi</taxon>
        <taxon>Mammalia</taxon>
        <taxon>Eutheria</taxon>
        <taxon>Euarchontoglires</taxon>
        <taxon>Glires</taxon>
        <taxon>Rodentia</taxon>
        <taxon>Myomorpha</taxon>
        <taxon>Muroidea</taxon>
        <taxon>Muridae</taxon>
        <taxon>Murinae</taxon>
        <taxon>Rattus</taxon>
    </lineage>
</organism>
<evidence type="ECO:0000250" key="1">
    <source>
        <dbReference type="UniProtKB" id="O09005"/>
    </source>
</evidence>
<evidence type="ECO:0000250" key="2">
    <source>
        <dbReference type="UniProtKB" id="O15121"/>
    </source>
</evidence>
<evidence type="ECO:0000250" key="3">
    <source>
        <dbReference type="UniProtKB" id="Q5F3C1"/>
    </source>
</evidence>
<evidence type="ECO:0000255" key="4"/>
<evidence type="ECO:0000305" key="5"/>
<evidence type="ECO:0000312" key="6">
    <source>
        <dbReference type="RGD" id="70917"/>
    </source>
</evidence>
<accession>Q5XIF5</accession>
<accession>Q564G4</accession>
<accession>Q91XI6</accession>
<protein>
    <recommendedName>
        <fullName evidence="5">Sphingolipid delta(4)-desaturase DES1</fullName>
        <ecNumber evidence="2">1.14.19.17</ecNumber>
    </recommendedName>
    <alternativeName>
        <fullName>Degenerative spermatocyte homolog 1</fullName>
    </alternativeName>
    <alternativeName>
        <fullName>Degenerative spermatocyte-like protein RDES</fullName>
    </alternativeName>
    <alternativeName>
        <fullName>Dihydroceramide desaturase-1</fullName>
    </alternativeName>
    <alternativeName>
        <fullName>Retinol isomerase</fullName>
        <ecNumber evidence="3">5.2.1.-</ecNumber>
    </alternativeName>
</protein>
<name>DEGS1_RAT</name>
<proteinExistence type="evidence at transcript level"/>
<sequence length="323" mass="38055">MGNRVSREEFEWVYTDQPHAARRQEILAKYPEIKSLMKPDPNLIWIVTSMLLVQLASFYLVKDLDWKWLMFWSYAFGSCLNHSMTLAIHEISHNFPFGHHKAMWNRWFGMFANLSLGVPYSISFKRYHMDHHRYLGADGIDVDIPTDFEGWFFCTTLRKLVWVILQPLFYAFRPLFINPKPITHLEVINTVIQVTFDVLVYYVFGVKSLVYMLAASLLGLGLHPISGHFIAEHYMFLKGHETYSYYGPLNLLTFNVGYHNEHHDFPNVPGKNLPLVRKIASEYYDNLPHYNSWIRVLYDFVMDDTISPYSRMKRPPKGNEIQE</sequence>
<feature type="initiator methionine" description="Removed" evidence="2">
    <location>
        <position position="1"/>
    </location>
</feature>
<feature type="chain" id="PRO_0000312731" description="Sphingolipid delta(4)-desaturase DES1">
    <location>
        <begin position="2"/>
        <end position="323"/>
    </location>
</feature>
<feature type="transmembrane region" description="Helical" evidence="4">
    <location>
        <begin position="41"/>
        <end position="61"/>
    </location>
</feature>
<feature type="transmembrane region" description="Helical" evidence="4">
    <location>
        <begin position="68"/>
        <end position="88"/>
    </location>
</feature>
<feature type="transmembrane region" description="Helical" evidence="4">
    <location>
        <begin position="104"/>
        <end position="124"/>
    </location>
</feature>
<feature type="transmembrane region" description="Helical" evidence="4">
    <location>
        <begin position="152"/>
        <end position="172"/>
    </location>
</feature>
<feature type="transmembrane region" description="Helical" evidence="4">
    <location>
        <begin position="184"/>
        <end position="204"/>
    </location>
</feature>
<feature type="transmembrane region" description="Helical" evidence="4">
    <location>
        <begin position="210"/>
        <end position="230"/>
    </location>
</feature>
<feature type="short sequence motif" description="Histidine box-1" evidence="5">
    <location>
        <begin position="89"/>
        <end position="93"/>
    </location>
</feature>
<feature type="short sequence motif" description="Histidine box-2" evidence="5">
    <location>
        <begin position="128"/>
        <end position="132"/>
    </location>
</feature>
<feature type="short sequence motif" description="Histidine box-3" evidence="5">
    <location>
        <begin position="259"/>
        <end position="263"/>
    </location>
</feature>
<feature type="modified residue" description="Phosphoserine" evidence="2">
    <location>
        <position position="307"/>
    </location>
</feature>
<feature type="lipid moiety-binding region" description="N-myristoyl glycine" evidence="2">
    <location>
        <position position="2"/>
    </location>
</feature>
<feature type="sequence conflict" description="In Ref. 1; AAK64511." evidence="5" ref="1">
    <original>N</original>
    <variation>S</variation>
    <location>
        <position position="3"/>
    </location>
</feature>
<feature type="sequence conflict" description="In Ref. 1; AAK64511." evidence="5" ref="1">
    <original>Q</original>
    <variation>K</variation>
    <location>
        <position position="24"/>
    </location>
</feature>
<feature type="sequence conflict" description="In Ref. 1; AAK64511." evidence="5" ref="1">
    <original>P</original>
    <variation>H</variation>
    <location>
        <position position="41"/>
    </location>
</feature>
<feature type="sequence conflict" description="In Ref. 1; AAK64511." evidence="5" ref="1">
    <original>TS</original>
    <variation>AM</variation>
    <location>
        <begin position="48"/>
        <end position="49"/>
    </location>
</feature>
<feature type="sequence conflict" description="In Ref. 1; AAK64511." evidence="5" ref="1">
    <original>LM</original>
    <variation>VI</variation>
    <location>
        <begin position="69"/>
        <end position="70"/>
    </location>
</feature>
<feature type="sequence conflict" description="In Ref. 1; AAK64511." evidence="5" ref="1">
    <original>A</original>
    <variation>V</variation>
    <location>
        <position position="75"/>
    </location>
</feature>
<feature type="sequence conflict" description="In Ref. 1; AAK64511." evidence="5" ref="1">
    <original>M</original>
    <variation>L</variation>
    <location>
        <position position="103"/>
    </location>
</feature>
<feature type="sequence conflict" description="In Ref. 1; AAK64511." evidence="5" ref="1">
    <original>T</original>
    <variation>A</variation>
    <location>
        <position position="190"/>
    </location>
</feature>
<feature type="sequence conflict" description="In Ref. 2; CAI79416." evidence="5" ref="2">
    <original>Q</original>
    <variation>H</variation>
    <location>
        <position position="322"/>
    </location>
</feature>